<feature type="chain" id="PRO_0000206956" description="Exodeoxyribonuclease 7 small subunit">
    <location>
        <begin position="1"/>
        <end position="78"/>
    </location>
</feature>
<dbReference type="EC" id="3.1.11.6" evidence="1"/>
<dbReference type="EMBL" id="AE017340">
    <property type="protein sequence ID" value="AAV82968.1"/>
    <property type="molecule type" value="Genomic_DNA"/>
</dbReference>
<dbReference type="RefSeq" id="WP_011235364.1">
    <property type="nucleotide sequence ID" value="NC_006512.1"/>
</dbReference>
<dbReference type="SMR" id="Q5QVD9"/>
<dbReference type="STRING" id="283942.IL2136"/>
<dbReference type="GeneID" id="41337325"/>
<dbReference type="KEGG" id="ilo:IL2136"/>
<dbReference type="eggNOG" id="COG1722">
    <property type="taxonomic scope" value="Bacteria"/>
</dbReference>
<dbReference type="HOGENOM" id="CLU_145918_3_3_6"/>
<dbReference type="Proteomes" id="UP000001171">
    <property type="component" value="Chromosome"/>
</dbReference>
<dbReference type="GO" id="GO:0005829">
    <property type="term" value="C:cytosol"/>
    <property type="evidence" value="ECO:0007669"/>
    <property type="project" value="TreeGrafter"/>
</dbReference>
<dbReference type="GO" id="GO:0009318">
    <property type="term" value="C:exodeoxyribonuclease VII complex"/>
    <property type="evidence" value="ECO:0007669"/>
    <property type="project" value="InterPro"/>
</dbReference>
<dbReference type="GO" id="GO:0008855">
    <property type="term" value="F:exodeoxyribonuclease VII activity"/>
    <property type="evidence" value="ECO:0007669"/>
    <property type="project" value="UniProtKB-UniRule"/>
</dbReference>
<dbReference type="GO" id="GO:0006308">
    <property type="term" value="P:DNA catabolic process"/>
    <property type="evidence" value="ECO:0007669"/>
    <property type="project" value="UniProtKB-UniRule"/>
</dbReference>
<dbReference type="Gene3D" id="1.10.287.1040">
    <property type="entry name" value="Exonuclease VII, small subunit"/>
    <property type="match status" value="1"/>
</dbReference>
<dbReference type="HAMAP" id="MF_00337">
    <property type="entry name" value="Exonuc_7_S"/>
    <property type="match status" value="1"/>
</dbReference>
<dbReference type="InterPro" id="IPR003761">
    <property type="entry name" value="Exonuc_VII_S"/>
</dbReference>
<dbReference type="InterPro" id="IPR037004">
    <property type="entry name" value="Exonuc_VII_ssu_sf"/>
</dbReference>
<dbReference type="NCBIfam" id="NF002140">
    <property type="entry name" value="PRK00977.1-4"/>
    <property type="match status" value="1"/>
</dbReference>
<dbReference type="NCBIfam" id="TIGR01280">
    <property type="entry name" value="xseB"/>
    <property type="match status" value="1"/>
</dbReference>
<dbReference type="PANTHER" id="PTHR34137">
    <property type="entry name" value="EXODEOXYRIBONUCLEASE 7 SMALL SUBUNIT"/>
    <property type="match status" value="1"/>
</dbReference>
<dbReference type="PANTHER" id="PTHR34137:SF1">
    <property type="entry name" value="EXODEOXYRIBONUCLEASE 7 SMALL SUBUNIT"/>
    <property type="match status" value="1"/>
</dbReference>
<dbReference type="Pfam" id="PF02609">
    <property type="entry name" value="Exonuc_VII_S"/>
    <property type="match status" value="1"/>
</dbReference>
<dbReference type="PIRSF" id="PIRSF006488">
    <property type="entry name" value="Exonuc_VII_S"/>
    <property type="match status" value="1"/>
</dbReference>
<dbReference type="SUPFAM" id="SSF116842">
    <property type="entry name" value="XseB-like"/>
    <property type="match status" value="1"/>
</dbReference>
<reference key="1">
    <citation type="journal article" date="2004" name="Proc. Natl. Acad. Sci. U.S.A.">
        <title>Genome sequence of the deep-sea gamma-proteobacterium Idiomarina loihiensis reveals amino acid fermentation as a source of carbon and energy.</title>
        <authorList>
            <person name="Hou S."/>
            <person name="Saw J.H."/>
            <person name="Lee K.S."/>
            <person name="Freitas T.A."/>
            <person name="Belisle C."/>
            <person name="Kawarabayasi Y."/>
            <person name="Donachie S.P."/>
            <person name="Pikina A."/>
            <person name="Galperin M.Y."/>
            <person name="Koonin E.V."/>
            <person name="Makarova K.S."/>
            <person name="Omelchenko M.V."/>
            <person name="Sorokin A."/>
            <person name="Wolf Y.I."/>
            <person name="Li Q.X."/>
            <person name="Keum Y.S."/>
            <person name="Campbell S."/>
            <person name="Denery J."/>
            <person name="Aizawa S."/>
            <person name="Shibata S."/>
            <person name="Malahoff A."/>
            <person name="Alam M."/>
        </authorList>
    </citation>
    <scope>NUCLEOTIDE SEQUENCE [LARGE SCALE GENOMIC DNA]</scope>
    <source>
        <strain>ATCC BAA-735 / DSM 15497 / L2-TR</strain>
    </source>
</reference>
<sequence>MADEQKQQSFEQALEQLEQLVNELEQGDLPLEQSLKKFEQAIALSRSSQQQLQQAEQKVTTLLAEQQSGNDESNGELM</sequence>
<gene>
    <name evidence="1" type="primary">xseB</name>
    <name type="ordered locus">IL2136</name>
</gene>
<accession>Q5QVD9</accession>
<proteinExistence type="inferred from homology"/>
<keyword id="KW-0963">Cytoplasm</keyword>
<keyword id="KW-0269">Exonuclease</keyword>
<keyword id="KW-0378">Hydrolase</keyword>
<keyword id="KW-0540">Nuclease</keyword>
<keyword id="KW-1185">Reference proteome</keyword>
<comment type="function">
    <text evidence="1">Bidirectionally degrades single-stranded DNA into large acid-insoluble oligonucleotides, which are then degraded further into small acid-soluble oligonucleotides.</text>
</comment>
<comment type="catalytic activity">
    <reaction evidence="1">
        <text>Exonucleolytic cleavage in either 5'- to 3'- or 3'- to 5'-direction to yield nucleoside 5'-phosphates.</text>
        <dbReference type="EC" id="3.1.11.6"/>
    </reaction>
</comment>
<comment type="subunit">
    <text evidence="1">Heterooligomer composed of large and small subunits.</text>
</comment>
<comment type="subcellular location">
    <subcellularLocation>
        <location evidence="1">Cytoplasm</location>
    </subcellularLocation>
</comment>
<comment type="similarity">
    <text evidence="1">Belongs to the XseB family.</text>
</comment>
<evidence type="ECO:0000255" key="1">
    <source>
        <dbReference type="HAMAP-Rule" id="MF_00337"/>
    </source>
</evidence>
<protein>
    <recommendedName>
        <fullName evidence="1">Exodeoxyribonuclease 7 small subunit</fullName>
        <ecNumber evidence="1">3.1.11.6</ecNumber>
    </recommendedName>
    <alternativeName>
        <fullName evidence="1">Exodeoxyribonuclease VII small subunit</fullName>
        <shortName evidence="1">Exonuclease VII small subunit</shortName>
    </alternativeName>
</protein>
<organism>
    <name type="scientific">Idiomarina loihiensis (strain ATCC BAA-735 / DSM 15497 / L2-TR)</name>
    <dbReference type="NCBI Taxonomy" id="283942"/>
    <lineage>
        <taxon>Bacteria</taxon>
        <taxon>Pseudomonadati</taxon>
        <taxon>Pseudomonadota</taxon>
        <taxon>Gammaproteobacteria</taxon>
        <taxon>Alteromonadales</taxon>
        <taxon>Idiomarinaceae</taxon>
        <taxon>Idiomarina</taxon>
    </lineage>
</organism>
<name>EX7S_IDILO</name>